<accession>P29060</accession>
<accession>P82433</accession>
<proteinExistence type="evidence at protein level"/>
<evidence type="ECO:0000250" key="1"/>
<evidence type="ECO:0000255" key="2">
    <source>
        <dbReference type="PROSITE-ProRule" id="PRU01258"/>
    </source>
</evidence>
<evidence type="ECO:0000269" key="3">
    <source>
    </source>
</evidence>
<evidence type="ECO:0000305" key="4"/>
<keyword id="KW-0119">Carbohydrate metabolism</keyword>
<keyword id="KW-0134">Cell wall</keyword>
<keyword id="KW-0146">Chitin degradation</keyword>
<keyword id="KW-0903">Direct protein sequencing</keyword>
<keyword id="KW-1015">Disulfide bond</keyword>
<keyword id="KW-0326">Glycosidase</keyword>
<keyword id="KW-0378">Hydrolase</keyword>
<keyword id="KW-0624">Polysaccharide degradation</keyword>
<keyword id="KW-1185">Reference proteome</keyword>
<keyword id="KW-0964">Secreted</keyword>
<keyword id="KW-0732">Signal</keyword>
<feature type="signal peptide" evidence="3">
    <location>
        <begin position="1"/>
        <end position="22"/>
    </location>
</feature>
<feature type="chain" id="PRO_0000011918" description="Acidic endochitinase">
    <location>
        <begin position="23"/>
        <end position="291"/>
    </location>
</feature>
<feature type="domain" description="GH18" evidence="2">
    <location>
        <begin position="23"/>
        <end position="291"/>
    </location>
</feature>
<feature type="active site" description="Proton donor" evidence="2">
    <location>
        <position position="149"/>
    </location>
</feature>
<feature type="disulfide bond" evidence="1">
    <location>
        <begin position="42"/>
        <end position="89"/>
    </location>
</feature>
<feature type="disulfide bond" evidence="1">
    <location>
        <begin position="72"/>
        <end position="79"/>
    </location>
</feature>
<feature type="disulfide bond" evidence="1">
    <location>
        <begin position="180"/>
        <end position="209"/>
    </location>
</feature>
<protein>
    <recommendedName>
        <fullName>Acidic endochitinase</fullName>
        <ecNumber>3.2.1.14</ecNumber>
    </recommendedName>
</protein>
<sequence length="291" mass="31283">MIKYSFLLTALVLFLRALKLEAGDIVIYWGQNGNEGSLADTCATNNYAIVNIAFLVVFGNGQNPVLNLAGHCDPNAGACTGLSNDIRACQNQGIKVMLSLGGGAGSYFLSSADDARNVANYLWNNYLGGQSNTRPLGDAVLDGIDFDIEGGTTQHWDELAKTLSQFSQQRKVYLTAAPQCPFPDTWLNGALSTGLFDYVWVQFYNNPPCQYSGGSADNLKNYWNQWNAIQAGKIFLGLPAAQGAAGSGFIPSDVLVSQVLPLINGSPKYGGVMLWSKFYDNGYSSAIKANV</sequence>
<name>CHIA_TOBAC</name>
<dbReference type="EC" id="3.2.1.14"/>
<dbReference type="EMBL" id="Z11563">
    <property type="protein sequence ID" value="CAA77656.1"/>
    <property type="molecule type" value="mRNA"/>
</dbReference>
<dbReference type="PIR" id="S23544">
    <property type="entry name" value="S23544"/>
</dbReference>
<dbReference type="RefSeq" id="NP_001313082.1">
    <property type="nucleotide sequence ID" value="NM_001326153.1"/>
</dbReference>
<dbReference type="SMR" id="P29060"/>
<dbReference type="STRING" id="4097.P29060"/>
<dbReference type="CAZy" id="GH18">
    <property type="family name" value="Glycoside Hydrolase Family 18"/>
</dbReference>
<dbReference type="PaxDb" id="4097-P29060"/>
<dbReference type="GeneID" id="107825584"/>
<dbReference type="KEGG" id="nta:107825584"/>
<dbReference type="OMA" id="IRACQNQ"/>
<dbReference type="OrthoDB" id="6020543at2759"/>
<dbReference type="PhylomeDB" id="P29060"/>
<dbReference type="Proteomes" id="UP000084051">
    <property type="component" value="Unplaced"/>
</dbReference>
<dbReference type="GO" id="GO:0005576">
    <property type="term" value="C:extracellular region"/>
    <property type="evidence" value="ECO:0000318"/>
    <property type="project" value="GO_Central"/>
</dbReference>
<dbReference type="GO" id="GO:0008843">
    <property type="term" value="F:endochitinase activity"/>
    <property type="evidence" value="ECO:0007669"/>
    <property type="project" value="UniProtKB-EC"/>
</dbReference>
<dbReference type="GO" id="GO:0006032">
    <property type="term" value="P:chitin catabolic process"/>
    <property type="evidence" value="ECO:0007669"/>
    <property type="project" value="UniProtKB-KW"/>
</dbReference>
<dbReference type="GO" id="GO:0050832">
    <property type="term" value="P:defense response to fungus"/>
    <property type="evidence" value="ECO:0000318"/>
    <property type="project" value="GO_Central"/>
</dbReference>
<dbReference type="GO" id="GO:0000272">
    <property type="term" value="P:polysaccharide catabolic process"/>
    <property type="evidence" value="ECO:0007669"/>
    <property type="project" value="UniProtKB-KW"/>
</dbReference>
<dbReference type="CDD" id="cd02877">
    <property type="entry name" value="GH18_hevamine_XipI_class_III"/>
    <property type="match status" value="1"/>
</dbReference>
<dbReference type="FunFam" id="3.20.20.80:FF:000015">
    <property type="entry name" value="Acidic endochitinase SE2"/>
    <property type="match status" value="1"/>
</dbReference>
<dbReference type="Gene3D" id="3.20.20.80">
    <property type="entry name" value="Glycosidases"/>
    <property type="match status" value="1"/>
</dbReference>
<dbReference type="InterPro" id="IPR045321">
    <property type="entry name" value="Cts1-like"/>
</dbReference>
<dbReference type="InterPro" id="IPR001223">
    <property type="entry name" value="Glyco_hydro18_cat"/>
</dbReference>
<dbReference type="InterPro" id="IPR001579">
    <property type="entry name" value="Glyco_hydro_18_chit_AS"/>
</dbReference>
<dbReference type="InterPro" id="IPR017853">
    <property type="entry name" value="Glycoside_hydrolase_SF"/>
</dbReference>
<dbReference type="InterPro" id="IPR050542">
    <property type="entry name" value="Glycosyl_Hydrlase18_Chitinase"/>
</dbReference>
<dbReference type="PANTHER" id="PTHR45708:SF22">
    <property type="entry name" value="ACIDIC ENDOCHITINASE"/>
    <property type="match status" value="1"/>
</dbReference>
<dbReference type="PANTHER" id="PTHR45708">
    <property type="entry name" value="ENDOCHITINASE"/>
    <property type="match status" value="1"/>
</dbReference>
<dbReference type="Pfam" id="PF00704">
    <property type="entry name" value="Glyco_hydro_18"/>
    <property type="match status" value="1"/>
</dbReference>
<dbReference type="SUPFAM" id="SSF51445">
    <property type="entry name" value="(Trans)glycosidases"/>
    <property type="match status" value="1"/>
</dbReference>
<dbReference type="PROSITE" id="PS01095">
    <property type="entry name" value="GH18_1"/>
    <property type="match status" value="1"/>
</dbReference>
<dbReference type="PROSITE" id="PS51910">
    <property type="entry name" value="GH18_2"/>
    <property type="match status" value="1"/>
</dbReference>
<comment type="function">
    <text>This protein functions as a defense against chitin containing fungal pathogens.</text>
</comment>
<comment type="catalytic activity">
    <reaction>
        <text>Random endo-hydrolysis of N-acetyl-beta-D-glucosaminide (1-&gt;4)-beta-linkages in chitin and chitodextrins.</text>
        <dbReference type="EC" id="3.2.1.14"/>
    </reaction>
</comment>
<comment type="subcellular location">
    <subcellularLocation>
        <location evidence="3">Secreted</location>
        <location evidence="3">Cell wall</location>
    </subcellularLocation>
</comment>
<comment type="induction">
    <text>By TMV infection.</text>
</comment>
<comment type="similarity">
    <text evidence="4">Belongs to the glycosyl hydrolase 18 family. Chitinase class II subfamily.</text>
</comment>
<organism>
    <name type="scientific">Nicotiana tabacum</name>
    <name type="common">Common tobacco</name>
    <dbReference type="NCBI Taxonomy" id="4097"/>
    <lineage>
        <taxon>Eukaryota</taxon>
        <taxon>Viridiplantae</taxon>
        <taxon>Streptophyta</taxon>
        <taxon>Embryophyta</taxon>
        <taxon>Tracheophyta</taxon>
        <taxon>Spermatophyta</taxon>
        <taxon>Magnoliopsida</taxon>
        <taxon>eudicotyledons</taxon>
        <taxon>Gunneridae</taxon>
        <taxon>Pentapetalae</taxon>
        <taxon>asterids</taxon>
        <taxon>lamiids</taxon>
        <taxon>Solanales</taxon>
        <taxon>Solanaceae</taxon>
        <taxon>Nicotianoideae</taxon>
        <taxon>Nicotianeae</taxon>
        <taxon>Nicotiana</taxon>
    </lineage>
</organism>
<reference key="1">
    <citation type="journal article" date="1992" name="Plant Mol. Biol.">
        <title>Acidic and basic class III chitinase mRNA accumulation in response to TMV infection of tobacco.</title>
        <authorList>
            <person name="Lawton K."/>
            <person name="Ward E."/>
            <person name="Payne G."/>
            <person name="Moyer M."/>
            <person name="Ryals J."/>
        </authorList>
    </citation>
    <scope>NUCLEOTIDE SEQUENCE [MRNA]</scope>
    <source>
        <strain>cv. Xanthi</strain>
        <tissue>Leaf</tissue>
    </source>
</reference>
<reference key="2">
    <citation type="journal article" date="2001" name="Planta">
        <title>Proteomic analysis reveals a novel set of cell wall proteins in a transformed tobacco cell culture that synthesises secondary walls as determined by biochemical and morphological parameters.</title>
        <authorList>
            <person name="Blee K.A."/>
            <person name="Wheatley E.R."/>
            <person name="Bonham V.A."/>
            <person name="Mitchell G.P."/>
            <person name="Robertson D."/>
            <person name="Slabas A.R."/>
            <person name="Burrell M.M."/>
            <person name="Wojtaszek P."/>
            <person name="Bolwell G.P."/>
        </authorList>
    </citation>
    <scope>PROTEIN SEQUENCE OF 23-36</scope>
    <scope>SUBCELLULAR LOCATION</scope>
    <source>
        <strain>cv. Petit Havana</strain>
    </source>
</reference>